<organism>
    <name type="scientific">Shewanella putrefaciens (strain CN-32 / ATCC BAA-453)</name>
    <dbReference type="NCBI Taxonomy" id="319224"/>
    <lineage>
        <taxon>Bacteria</taxon>
        <taxon>Pseudomonadati</taxon>
        <taxon>Pseudomonadota</taxon>
        <taxon>Gammaproteobacteria</taxon>
        <taxon>Alteromonadales</taxon>
        <taxon>Shewanellaceae</taxon>
        <taxon>Shewanella</taxon>
    </lineage>
</organism>
<name>FADJ_SHEPC</name>
<feature type="chain" id="PRO_0000323529" description="Fatty acid oxidation complex subunit alpha">
    <location>
        <begin position="1"/>
        <end position="706"/>
    </location>
</feature>
<feature type="region of interest" description="Enoyl-CoA hydratase" evidence="1">
    <location>
        <begin position="1"/>
        <end position="188"/>
    </location>
</feature>
<feature type="region of interest" description="3-hydroxyacyl-CoA dehydrogenase" evidence="1">
    <location>
        <begin position="308"/>
        <end position="706"/>
    </location>
</feature>
<feature type="site" description="Important for catalytic activity" evidence="1">
    <location>
        <position position="116"/>
    </location>
</feature>
<feature type="site" description="Important for catalytic activity" evidence="1">
    <location>
        <position position="138"/>
    </location>
</feature>
<sequence>MEKTFNLTRRDDGIAILTMDVPGETMNTLKAQFGPEISEILAEIKSDPHIRGLVLISGKKDSFVAGADISMLDACKTAGDAKALSQQGHVVFNELEALKIPVVAAIHGACLGGGLELALACHQRVCSDDGKTMLGVPEVQLGLLPGGGGTQRLPRLVGITTALDMMLTGKQIRPKQALKMGLVNDVVPQTILLQTAVEMALAGKRAPKPIKKSLVNQVLEGTSFGRNIIFDQATKQVEKKTQGNYPAPAKIIDCVRQGIAKGMQKGLEVEASHFAELVVSKESEALRSIFFATTEMKKETGAEGATPRKVKKAVILGGGLMGGGIASVTTTKAKIPVRVKDISEKGLSNALAYAYKLLDKGVKRRHMTPAVRDNLMALMTTTTEYKGVKDADIVVEAVFEDLALKHQMVKDIERECGEHTIFASNTSSLPISQIAEAATRPENVIGLHYFSPVEKMPLVEVIAHAKTSPETIATTVAFARKQGKTPIVVQDGAGFYVNRILALYMNEAAQLLLEGQSVEHLDKALVKFGFPVGPITLLDEVGIDVGAKISPILDKELGERFKAPAAFDKLLGDDRKGRKNGKGFYQYGASSKKTKAVDETVYGVLGIKPSTNKDAKALAERCVVQMLNEAVRCLDEGIIASPRDGDIGAIFGIGFPPFLGGPFHYIDTLGAANLVKILEGYQSQFGNRFEPCERLKTMARENVSFF</sequence>
<accession>A4Y897</accession>
<protein>
    <recommendedName>
        <fullName evidence="1">Fatty acid oxidation complex subunit alpha</fullName>
    </recommendedName>
    <domain>
        <recommendedName>
            <fullName evidence="1">Enoyl-CoA hydratase/3-hydroxybutyryl-CoA epimerase</fullName>
            <ecNumber evidence="1">4.2.1.17</ecNumber>
            <ecNumber evidence="1">5.1.2.3</ecNumber>
        </recommendedName>
    </domain>
    <domain>
        <recommendedName>
            <fullName evidence="1">3-hydroxyacyl-CoA dehydrogenase</fullName>
            <ecNumber evidence="1">1.1.1.35</ecNumber>
        </recommendedName>
    </domain>
</protein>
<dbReference type="EC" id="4.2.1.17" evidence="1"/>
<dbReference type="EC" id="5.1.2.3" evidence="1"/>
<dbReference type="EC" id="1.1.1.35" evidence="1"/>
<dbReference type="EMBL" id="CP000681">
    <property type="protein sequence ID" value="ABP76180.1"/>
    <property type="molecule type" value="Genomic_DNA"/>
</dbReference>
<dbReference type="SMR" id="A4Y897"/>
<dbReference type="STRING" id="319224.Sputcn32_2459"/>
<dbReference type="KEGG" id="spc:Sputcn32_2459"/>
<dbReference type="eggNOG" id="COG1024">
    <property type="taxonomic scope" value="Bacteria"/>
</dbReference>
<dbReference type="eggNOG" id="COG1250">
    <property type="taxonomic scope" value="Bacteria"/>
</dbReference>
<dbReference type="HOGENOM" id="CLU_009834_16_1_6"/>
<dbReference type="UniPathway" id="UPA00659"/>
<dbReference type="GO" id="GO:0005737">
    <property type="term" value="C:cytoplasm"/>
    <property type="evidence" value="ECO:0007669"/>
    <property type="project" value="UniProtKB-SubCell"/>
</dbReference>
<dbReference type="GO" id="GO:0008692">
    <property type="term" value="F:3-hydroxybutyryl-CoA epimerase activity"/>
    <property type="evidence" value="ECO:0007669"/>
    <property type="project" value="UniProtKB-UniRule"/>
</dbReference>
<dbReference type="GO" id="GO:0004300">
    <property type="term" value="F:enoyl-CoA hydratase activity"/>
    <property type="evidence" value="ECO:0007669"/>
    <property type="project" value="UniProtKB-UniRule"/>
</dbReference>
<dbReference type="GO" id="GO:0016509">
    <property type="term" value="F:long-chain-3-hydroxyacyl-CoA dehydrogenase activity"/>
    <property type="evidence" value="ECO:0007669"/>
    <property type="project" value="TreeGrafter"/>
</dbReference>
<dbReference type="GO" id="GO:0070403">
    <property type="term" value="F:NAD+ binding"/>
    <property type="evidence" value="ECO:0007669"/>
    <property type="project" value="InterPro"/>
</dbReference>
<dbReference type="GO" id="GO:0006635">
    <property type="term" value="P:fatty acid beta-oxidation"/>
    <property type="evidence" value="ECO:0007669"/>
    <property type="project" value="UniProtKB-UniRule"/>
</dbReference>
<dbReference type="CDD" id="cd06558">
    <property type="entry name" value="crotonase-like"/>
    <property type="match status" value="1"/>
</dbReference>
<dbReference type="FunFam" id="1.10.1040.50:FF:000003">
    <property type="entry name" value="Fatty acid oxidation complex subunit alpha"/>
    <property type="match status" value="1"/>
</dbReference>
<dbReference type="FunFam" id="3.90.226.10:FF:000011">
    <property type="entry name" value="Fatty acid oxidation complex subunit alpha"/>
    <property type="match status" value="1"/>
</dbReference>
<dbReference type="FunFam" id="3.40.50.720:FF:000009">
    <property type="entry name" value="Fatty oxidation complex, alpha subunit"/>
    <property type="match status" value="1"/>
</dbReference>
<dbReference type="Gene3D" id="1.10.1040.50">
    <property type="match status" value="1"/>
</dbReference>
<dbReference type="Gene3D" id="3.90.226.10">
    <property type="entry name" value="2-enoyl-CoA Hydratase, Chain A, domain 1"/>
    <property type="match status" value="1"/>
</dbReference>
<dbReference type="Gene3D" id="3.40.50.720">
    <property type="entry name" value="NAD(P)-binding Rossmann-like Domain"/>
    <property type="match status" value="1"/>
</dbReference>
<dbReference type="HAMAP" id="MF_01617">
    <property type="entry name" value="FadJ"/>
    <property type="match status" value="1"/>
</dbReference>
<dbReference type="InterPro" id="IPR006176">
    <property type="entry name" value="3-OHacyl-CoA_DH_NAD-bd"/>
</dbReference>
<dbReference type="InterPro" id="IPR006108">
    <property type="entry name" value="3HC_DH_C"/>
</dbReference>
<dbReference type="InterPro" id="IPR008927">
    <property type="entry name" value="6-PGluconate_DH-like_C_sf"/>
</dbReference>
<dbReference type="InterPro" id="IPR029045">
    <property type="entry name" value="ClpP/crotonase-like_dom_sf"/>
</dbReference>
<dbReference type="InterPro" id="IPR001753">
    <property type="entry name" value="Enoyl-CoA_hydra/iso"/>
</dbReference>
<dbReference type="InterPro" id="IPR050136">
    <property type="entry name" value="FA_oxidation_alpha_subunit"/>
</dbReference>
<dbReference type="InterPro" id="IPR012802">
    <property type="entry name" value="FadJ"/>
</dbReference>
<dbReference type="InterPro" id="IPR036291">
    <property type="entry name" value="NAD(P)-bd_dom_sf"/>
</dbReference>
<dbReference type="NCBIfam" id="TIGR02440">
    <property type="entry name" value="FadJ"/>
    <property type="match status" value="1"/>
</dbReference>
<dbReference type="NCBIfam" id="NF008363">
    <property type="entry name" value="PRK11154.1"/>
    <property type="match status" value="1"/>
</dbReference>
<dbReference type="PANTHER" id="PTHR43612">
    <property type="entry name" value="TRIFUNCTIONAL ENZYME SUBUNIT ALPHA"/>
    <property type="match status" value="1"/>
</dbReference>
<dbReference type="PANTHER" id="PTHR43612:SF3">
    <property type="entry name" value="TRIFUNCTIONAL ENZYME SUBUNIT ALPHA, MITOCHONDRIAL"/>
    <property type="match status" value="1"/>
</dbReference>
<dbReference type="Pfam" id="PF00725">
    <property type="entry name" value="3HCDH"/>
    <property type="match status" value="2"/>
</dbReference>
<dbReference type="Pfam" id="PF02737">
    <property type="entry name" value="3HCDH_N"/>
    <property type="match status" value="1"/>
</dbReference>
<dbReference type="Pfam" id="PF00378">
    <property type="entry name" value="ECH_1"/>
    <property type="match status" value="1"/>
</dbReference>
<dbReference type="SUPFAM" id="SSF48179">
    <property type="entry name" value="6-phosphogluconate dehydrogenase C-terminal domain-like"/>
    <property type="match status" value="2"/>
</dbReference>
<dbReference type="SUPFAM" id="SSF52096">
    <property type="entry name" value="ClpP/crotonase"/>
    <property type="match status" value="1"/>
</dbReference>
<dbReference type="SUPFAM" id="SSF51735">
    <property type="entry name" value="NAD(P)-binding Rossmann-fold domains"/>
    <property type="match status" value="1"/>
</dbReference>
<evidence type="ECO:0000255" key="1">
    <source>
        <dbReference type="HAMAP-Rule" id="MF_01617"/>
    </source>
</evidence>
<keyword id="KW-0963">Cytoplasm</keyword>
<keyword id="KW-0276">Fatty acid metabolism</keyword>
<keyword id="KW-0413">Isomerase</keyword>
<keyword id="KW-0442">Lipid degradation</keyword>
<keyword id="KW-0443">Lipid metabolism</keyword>
<keyword id="KW-0456">Lyase</keyword>
<keyword id="KW-0511">Multifunctional enzyme</keyword>
<keyword id="KW-0520">NAD</keyword>
<keyword id="KW-0560">Oxidoreductase</keyword>
<reference key="1">
    <citation type="submission" date="2007-04" db="EMBL/GenBank/DDBJ databases">
        <title>Complete sequence of Shewanella putrefaciens CN-32.</title>
        <authorList>
            <consortium name="US DOE Joint Genome Institute"/>
            <person name="Copeland A."/>
            <person name="Lucas S."/>
            <person name="Lapidus A."/>
            <person name="Barry K."/>
            <person name="Detter J.C."/>
            <person name="Glavina del Rio T."/>
            <person name="Hammon N."/>
            <person name="Israni S."/>
            <person name="Dalin E."/>
            <person name="Tice H."/>
            <person name="Pitluck S."/>
            <person name="Chain P."/>
            <person name="Malfatti S."/>
            <person name="Shin M."/>
            <person name="Vergez L."/>
            <person name="Schmutz J."/>
            <person name="Larimer F."/>
            <person name="Land M."/>
            <person name="Hauser L."/>
            <person name="Kyrpides N."/>
            <person name="Mikhailova N."/>
            <person name="Romine M.F."/>
            <person name="Fredrickson J."/>
            <person name="Tiedje J."/>
            <person name="Richardson P."/>
        </authorList>
    </citation>
    <scope>NUCLEOTIDE SEQUENCE [LARGE SCALE GENOMIC DNA]</scope>
    <source>
        <strain>CN-32 / ATCC BAA-453</strain>
    </source>
</reference>
<proteinExistence type="inferred from homology"/>
<gene>
    <name evidence="1" type="primary">fadJ</name>
    <name type="ordered locus">Sputcn32_2459</name>
</gene>
<comment type="function">
    <text evidence="1">Catalyzes the formation of a hydroxyacyl-CoA by addition of water on enoyl-CoA. Also exhibits 3-hydroxyacyl-CoA epimerase and 3-hydroxyacyl-CoA dehydrogenase activities.</text>
</comment>
<comment type="catalytic activity">
    <reaction evidence="1">
        <text>a (3S)-3-hydroxyacyl-CoA = a (2E)-enoyl-CoA + H2O</text>
        <dbReference type="Rhea" id="RHEA:16105"/>
        <dbReference type="ChEBI" id="CHEBI:15377"/>
        <dbReference type="ChEBI" id="CHEBI:57318"/>
        <dbReference type="ChEBI" id="CHEBI:58856"/>
        <dbReference type="EC" id="4.2.1.17"/>
    </reaction>
</comment>
<comment type="catalytic activity">
    <reaction evidence="1">
        <text>a 4-saturated-(3S)-3-hydroxyacyl-CoA = a (3E)-enoyl-CoA + H2O</text>
        <dbReference type="Rhea" id="RHEA:20724"/>
        <dbReference type="ChEBI" id="CHEBI:15377"/>
        <dbReference type="ChEBI" id="CHEBI:58521"/>
        <dbReference type="ChEBI" id="CHEBI:137480"/>
        <dbReference type="EC" id="4.2.1.17"/>
    </reaction>
</comment>
<comment type="catalytic activity">
    <reaction evidence="1">
        <text>a (3S)-3-hydroxyacyl-CoA + NAD(+) = a 3-oxoacyl-CoA + NADH + H(+)</text>
        <dbReference type="Rhea" id="RHEA:22432"/>
        <dbReference type="ChEBI" id="CHEBI:15378"/>
        <dbReference type="ChEBI" id="CHEBI:57318"/>
        <dbReference type="ChEBI" id="CHEBI:57540"/>
        <dbReference type="ChEBI" id="CHEBI:57945"/>
        <dbReference type="ChEBI" id="CHEBI:90726"/>
        <dbReference type="EC" id="1.1.1.35"/>
    </reaction>
</comment>
<comment type="catalytic activity">
    <reaction evidence="1">
        <text>(3S)-3-hydroxybutanoyl-CoA = (3R)-3-hydroxybutanoyl-CoA</text>
        <dbReference type="Rhea" id="RHEA:21760"/>
        <dbReference type="ChEBI" id="CHEBI:57315"/>
        <dbReference type="ChEBI" id="CHEBI:57316"/>
        <dbReference type="EC" id="5.1.2.3"/>
    </reaction>
</comment>
<comment type="pathway">
    <text evidence="1">Lipid metabolism; fatty acid beta-oxidation.</text>
</comment>
<comment type="subunit">
    <text evidence="1">Heterotetramer of two alpha chains (FadJ) and two beta chains (FadI).</text>
</comment>
<comment type="subcellular location">
    <subcellularLocation>
        <location evidence="1">Cytoplasm</location>
    </subcellularLocation>
</comment>
<comment type="similarity">
    <text evidence="1">In the N-terminal section; belongs to the enoyl-CoA hydratase/isomerase family.</text>
</comment>
<comment type="similarity">
    <text evidence="1">In the central section; belongs to the 3-hydroxyacyl-CoA dehydrogenase family.</text>
</comment>